<name>FGR27_CANAL</name>
<dbReference type="EMBL" id="CP017627">
    <property type="protein sequence ID" value="AOW29779.1"/>
    <property type="molecule type" value="Genomic_DNA"/>
</dbReference>
<dbReference type="RefSeq" id="XP_711432.1">
    <property type="nucleotide sequence ID" value="XM_706340.1"/>
</dbReference>
<dbReference type="SMR" id="Q59NX5"/>
<dbReference type="STRING" id="237561.Q59NX5"/>
<dbReference type="EnsemblFungi" id="C5_03680W_A-T">
    <property type="protein sequence ID" value="C5_03680W_A-T-p1"/>
    <property type="gene ID" value="C5_03680W_A"/>
</dbReference>
<dbReference type="GeneID" id="3646988"/>
<dbReference type="KEGG" id="cal:CAALFM_C503680WA"/>
<dbReference type="CGD" id="CAL0000198392">
    <property type="gene designation" value="FGR27"/>
</dbReference>
<dbReference type="VEuPathDB" id="FungiDB:C5_03680W_A"/>
<dbReference type="eggNOG" id="ENOG502QVYJ">
    <property type="taxonomic scope" value="Eukaryota"/>
</dbReference>
<dbReference type="HOGENOM" id="CLU_007695_1_0_1"/>
<dbReference type="InParanoid" id="Q59NX5"/>
<dbReference type="OMA" id="YHFAVII"/>
<dbReference type="OrthoDB" id="3364175at2759"/>
<dbReference type="Proteomes" id="UP000000559">
    <property type="component" value="Chromosome 5"/>
</dbReference>
<dbReference type="GO" id="GO:0005634">
    <property type="term" value="C:nucleus"/>
    <property type="evidence" value="ECO:0000318"/>
    <property type="project" value="GO_Central"/>
</dbReference>
<dbReference type="GO" id="GO:0000981">
    <property type="term" value="F:DNA-binding transcription factor activity, RNA polymerase II-specific"/>
    <property type="evidence" value="ECO:0000318"/>
    <property type="project" value="GO_Central"/>
</dbReference>
<dbReference type="GO" id="GO:0043565">
    <property type="term" value="F:sequence-specific DNA binding"/>
    <property type="evidence" value="ECO:0000318"/>
    <property type="project" value="GO_Central"/>
</dbReference>
<dbReference type="GO" id="GO:0008270">
    <property type="term" value="F:zinc ion binding"/>
    <property type="evidence" value="ECO:0007669"/>
    <property type="project" value="InterPro"/>
</dbReference>
<dbReference type="GO" id="GO:0007155">
    <property type="term" value="P:cell adhesion"/>
    <property type="evidence" value="ECO:0007669"/>
    <property type="project" value="UniProtKB-KW"/>
</dbReference>
<dbReference type="GO" id="GO:0009267">
    <property type="term" value="P:cellular response to starvation"/>
    <property type="evidence" value="ECO:0000315"/>
    <property type="project" value="CGD"/>
</dbReference>
<dbReference type="GO" id="GO:0006351">
    <property type="term" value="P:DNA-templated transcription"/>
    <property type="evidence" value="ECO:0007669"/>
    <property type="project" value="InterPro"/>
</dbReference>
<dbReference type="GO" id="GO:0030447">
    <property type="term" value="P:filamentous growth"/>
    <property type="evidence" value="ECO:0000315"/>
    <property type="project" value="CGD"/>
</dbReference>
<dbReference type="GO" id="GO:0036180">
    <property type="term" value="P:filamentous growth of a population of unicellular organisms in response to biotic stimulus"/>
    <property type="evidence" value="ECO:0000315"/>
    <property type="project" value="CGD"/>
</dbReference>
<dbReference type="GO" id="GO:0036170">
    <property type="term" value="P:filamentous growth of a population of unicellular organisms in response to starvation"/>
    <property type="evidence" value="ECO:0000315"/>
    <property type="project" value="CGD"/>
</dbReference>
<dbReference type="GO" id="GO:1900189">
    <property type="term" value="P:positive regulation of cell adhesion involved in single-species biofilm formation"/>
    <property type="evidence" value="ECO:0000315"/>
    <property type="project" value="CGD"/>
</dbReference>
<dbReference type="GO" id="GO:0010811">
    <property type="term" value="P:positive regulation of cell-substrate adhesion"/>
    <property type="evidence" value="ECO:0000315"/>
    <property type="project" value="CGD"/>
</dbReference>
<dbReference type="GO" id="GO:0045944">
    <property type="term" value="P:positive regulation of transcription by RNA polymerase II"/>
    <property type="evidence" value="ECO:0000318"/>
    <property type="project" value="GO_Central"/>
</dbReference>
<dbReference type="GO" id="GO:0006357">
    <property type="term" value="P:regulation of transcription by RNA polymerase II"/>
    <property type="evidence" value="ECO:0000315"/>
    <property type="project" value="CGD"/>
</dbReference>
<dbReference type="GO" id="GO:0044011">
    <property type="term" value="P:single-species biofilm formation on inanimate substrate"/>
    <property type="evidence" value="ECO:0000315"/>
    <property type="project" value="CGD"/>
</dbReference>
<dbReference type="CDD" id="cd12148">
    <property type="entry name" value="fungal_TF_MHR"/>
    <property type="match status" value="1"/>
</dbReference>
<dbReference type="CDD" id="cd00067">
    <property type="entry name" value="GAL4"/>
    <property type="match status" value="1"/>
</dbReference>
<dbReference type="Gene3D" id="4.10.240.10">
    <property type="entry name" value="Zn(2)-C6 fungal-type DNA-binding domain"/>
    <property type="match status" value="1"/>
</dbReference>
<dbReference type="InterPro" id="IPR050987">
    <property type="entry name" value="AtrR-like"/>
</dbReference>
<dbReference type="InterPro" id="IPR007219">
    <property type="entry name" value="Transcription_factor_dom_fun"/>
</dbReference>
<dbReference type="InterPro" id="IPR036864">
    <property type="entry name" value="Zn2-C6_fun-type_DNA-bd_sf"/>
</dbReference>
<dbReference type="InterPro" id="IPR001138">
    <property type="entry name" value="Zn2Cys6_DnaBD"/>
</dbReference>
<dbReference type="PANTHER" id="PTHR46910:SF3">
    <property type="entry name" value="HALOTOLERANCE PROTEIN 9-RELATED"/>
    <property type="match status" value="1"/>
</dbReference>
<dbReference type="PANTHER" id="PTHR46910">
    <property type="entry name" value="TRANSCRIPTION FACTOR PDR1"/>
    <property type="match status" value="1"/>
</dbReference>
<dbReference type="Pfam" id="PF04082">
    <property type="entry name" value="Fungal_trans"/>
    <property type="match status" value="1"/>
</dbReference>
<dbReference type="Pfam" id="PF00172">
    <property type="entry name" value="Zn_clus"/>
    <property type="match status" value="1"/>
</dbReference>
<dbReference type="SMART" id="SM00906">
    <property type="entry name" value="Fungal_trans"/>
    <property type="match status" value="1"/>
</dbReference>
<dbReference type="SMART" id="SM00066">
    <property type="entry name" value="GAL4"/>
    <property type="match status" value="1"/>
</dbReference>
<dbReference type="SUPFAM" id="SSF57701">
    <property type="entry name" value="Zn2/Cys6 DNA-binding domain"/>
    <property type="match status" value="1"/>
</dbReference>
<dbReference type="PROSITE" id="PS00463">
    <property type="entry name" value="ZN2_CY6_FUNGAL_1"/>
    <property type="match status" value="1"/>
</dbReference>
<dbReference type="PROSITE" id="PS50048">
    <property type="entry name" value="ZN2_CY6_FUNGAL_2"/>
    <property type="match status" value="1"/>
</dbReference>
<proteinExistence type="evidence at transcript level"/>
<gene>
    <name type="primary">FGR27</name>
    <name type="ordered locus">CAALFM_C503680WA</name>
    <name type="ORF">CaO19.6680</name>
</gene>
<keyword id="KW-0130">Cell adhesion</keyword>
<keyword id="KW-0175">Coiled coil</keyword>
<keyword id="KW-0238">DNA-binding</keyword>
<keyword id="KW-0479">Metal-binding</keyword>
<keyword id="KW-0539">Nucleus</keyword>
<keyword id="KW-1185">Reference proteome</keyword>
<keyword id="KW-0804">Transcription</keyword>
<keyword id="KW-0805">Transcription regulation</keyword>
<keyword id="KW-0862">Zinc</keyword>
<organism>
    <name type="scientific">Candida albicans (strain SC5314 / ATCC MYA-2876)</name>
    <name type="common">Yeast</name>
    <dbReference type="NCBI Taxonomy" id="237561"/>
    <lineage>
        <taxon>Eukaryota</taxon>
        <taxon>Fungi</taxon>
        <taxon>Dikarya</taxon>
        <taxon>Ascomycota</taxon>
        <taxon>Saccharomycotina</taxon>
        <taxon>Pichiomycetes</taxon>
        <taxon>Debaryomycetaceae</taxon>
        <taxon>Candida/Lodderomyces clade</taxon>
        <taxon>Candida</taxon>
    </lineage>
</organism>
<sequence>MSAPIVETKKASKRRIRRIPDDQRQKVSSACDNCKKRKFKCSGEKPCFECSKKGHDCTYTIIDKRSLRGERMAKLKQKKDNNEKQRELVNEQIAQSSIIHPQITPVLPVPEYANVTYQDSSHSTVSGNDSYHLSSSSSIPQNLPAIVLPDTLRDPNNRGILTPGSTPNSVSSESSVSNVCVPKSLQPLLSFPLENKNNLRHKSEEPDMDNNTNNVPKKGGISNQEGKSAILLVDKSGAFRYMGETSPLSVLYEARGIFYEYVGSTKLTEDLRGCPVTDKPLKITMKEAAPLPHPSERDVYIERFKVNINGAYFVFDMDKFYEEIVDKVYENPNSDLVQENRVLLYFVLAIGSTYKDFSERNPQAEKGAHYFESGRLILRDLVEDSAMWCVLCHYLQFHYYESILKKSTALVHLTAAINYAQSLGLHRNFVNEQFSKLTAEYEYRRKLFRSLYISDRISSVFIGRPLIINDYDWDDPARFKNTNASVLPLDFNSKCHIELTRICTLVGRIVANFYQDKMIDVKKTKNLAIQLRLWSKGLDPELAFGNVLNPSQISNNEDNGNTVILLGIHILHLWAVMLLSRPFFMFEAISKINPEMRKSFEEEEELSKQLCQAATKASILAIKLMNHYINTTFHEIKRMECYVIITCCFYASIILGITILNGTFEEAGYTENDLMNSLKDAQYILSQFSVCNKGAERYSEINLDLISALVNRHKGKEVKPVVDNWSCNLFNDFNFGDTSGQNDVQTMMDFQQFFVSSDLIQFEEITDGTSSLPFDYNNYNLFFGDKL</sequence>
<accession>Q59NX5</accession>
<accession>A0A1D8PNR1</accession>
<protein>
    <recommendedName>
        <fullName>Filamentous growth regulator 27</fullName>
    </recommendedName>
</protein>
<comment type="function">
    <text evidence="4 6">Transcription factor involved in yeast cell adherence to silicone substrate, filamentous growth, and biofilm formation.</text>
</comment>
<comment type="subcellular location">
    <subcellularLocation>
        <location evidence="2">Nucleus</location>
    </subcellularLocation>
</comment>
<comment type="induction">
    <text evidence="5">Induced during biofilm formation.</text>
</comment>
<evidence type="ECO:0000255" key="1"/>
<evidence type="ECO:0000255" key="2">
    <source>
        <dbReference type="PROSITE-ProRule" id="PRU00227"/>
    </source>
</evidence>
<evidence type="ECO:0000256" key="3">
    <source>
        <dbReference type="SAM" id="MobiDB-lite"/>
    </source>
</evidence>
<evidence type="ECO:0000269" key="4">
    <source>
    </source>
</evidence>
<evidence type="ECO:0000269" key="5">
    <source>
    </source>
</evidence>
<evidence type="ECO:0000269" key="6">
    <source>
    </source>
</evidence>
<feature type="chain" id="PRO_0000424864" description="Filamentous growth regulator 27">
    <location>
        <begin position="1"/>
        <end position="787"/>
    </location>
</feature>
<feature type="DNA-binding region" description="Zn(2)-C6 fungal-type" evidence="2">
    <location>
        <begin position="31"/>
        <end position="57"/>
    </location>
</feature>
<feature type="region of interest" description="Disordered" evidence="3">
    <location>
        <begin position="1"/>
        <end position="22"/>
    </location>
</feature>
<feature type="region of interest" description="Disordered" evidence="3">
    <location>
        <begin position="120"/>
        <end position="140"/>
    </location>
</feature>
<feature type="region of interest" description="Disordered" evidence="3">
    <location>
        <begin position="200"/>
        <end position="221"/>
    </location>
</feature>
<feature type="coiled-coil region" evidence="1">
    <location>
        <begin position="69"/>
        <end position="97"/>
    </location>
</feature>
<feature type="compositionally biased region" description="Polar residues" evidence="3">
    <location>
        <begin position="209"/>
        <end position="221"/>
    </location>
</feature>
<reference key="1">
    <citation type="journal article" date="2004" name="Proc. Natl. Acad. Sci. U.S.A.">
        <title>The diploid genome sequence of Candida albicans.</title>
        <authorList>
            <person name="Jones T."/>
            <person name="Federspiel N.A."/>
            <person name="Chibana H."/>
            <person name="Dungan J."/>
            <person name="Kalman S."/>
            <person name="Magee B.B."/>
            <person name="Newport G."/>
            <person name="Thorstenson Y.R."/>
            <person name="Agabian N."/>
            <person name="Magee P.T."/>
            <person name="Davis R.W."/>
            <person name="Scherer S."/>
        </authorList>
    </citation>
    <scope>NUCLEOTIDE SEQUENCE [LARGE SCALE GENOMIC DNA]</scope>
    <source>
        <strain>SC5314 / ATCC MYA-2876</strain>
    </source>
</reference>
<reference key="2">
    <citation type="journal article" date="2007" name="Genome Biol.">
        <title>Assembly of the Candida albicans genome into sixteen supercontigs aligned on the eight chromosomes.</title>
        <authorList>
            <person name="van het Hoog M."/>
            <person name="Rast T.J."/>
            <person name="Martchenko M."/>
            <person name="Grindle S."/>
            <person name="Dignard D."/>
            <person name="Hogues H."/>
            <person name="Cuomo C."/>
            <person name="Berriman M."/>
            <person name="Scherer S."/>
            <person name="Magee B.B."/>
            <person name="Whiteway M."/>
            <person name="Chibana H."/>
            <person name="Nantel A."/>
            <person name="Magee P.T."/>
        </authorList>
    </citation>
    <scope>GENOME REANNOTATION</scope>
    <source>
        <strain>SC5314 / ATCC MYA-2876</strain>
    </source>
</reference>
<reference key="3">
    <citation type="journal article" date="2013" name="Genome Biol.">
        <title>Assembly of a phased diploid Candida albicans genome facilitates allele-specific measurements and provides a simple model for repeat and indel structure.</title>
        <authorList>
            <person name="Muzzey D."/>
            <person name="Schwartz K."/>
            <person name="Weissman J.S."/>
            <person name="Sherlock G."/>
        </authorList>
    </citation>
    <scope>NUCLEOTIDE SEQUENCE [LARGE SCALE GENOMIC DNA]</scope>
    <scope>GENOME REANNOTATION</scope>
    <source>
        <strain>SC5314 / ATCC MYA-2876</strain>
    </source>
</reference>
<reference key="4">
    <citation type="journal article" date="2003" name="EMBO J.">
        <title>Haploinsufficiency-based large-scale forward genetic analysis of filamentous growth in the diploid human fungal pathogen C.albicans.</title>
        <authorList>
            <person name="Uhl M.A."/>
            <person name="Biery M."/>
            <person name="Craig N."/>
            <person name="Johnson A.D."/>
        </authorList>
    </citation>
    <scope>FUNCTION</scope>
</reference>
<reference key="5">
    <citation type="journal article" date="2005" name="Comp. Funct. Genomics">
        <title>In silico analysis for transcription factors with Zn(II)(2)C(6) binuclear cluster DNA-binding domains in Candida albicans.</title>
        <authorList>
            <person name="Maicas S."/>
            <person name="Moreno I."/>
            <person name="Nieto A."/>
            <person name="Gomez M."/>
            <person name="Sentandreu R."/>
            <person name="Valentin E."/>
        </authorList>
    </citation>
    <scope>DOMAIN</scope>
</reference>
<reference key="6">
    <citation type="journal article" date="2012" name="Cell">
        <title>A recently evolved transcriptional network controls biofilm development in Candida albicans.</title>
        <authorList>
            <person name="Nobile C.J."/>
            <person name="Fox E.P."/>
            <person name="Nett J.E."/>
            <person name="Sorrells T.R."/>
            <person name="Mitrovich Q.M."/>
            <person name="Hernday A.D."/>
            <person name="Tuch B.B."/>
            <person name="Andes D.R."/>
            <person name="Johnson A.D."/>
        </authorList>
    </citation>
    <scope>INDUCTION</scope>
</reference>
<reference key="7">
    <citation type="journal article" date="2012" name="PLoS Pathog.">
        <title>Portrait of Candida albicans adherence regulators.</title>
        <authorList>
            <person name="Finkel J.S."/>
            <person name="Xu W."/>
            <person name="Huang D."/>
            <person name="Hill E.M."/>
            <person name="Desai J.V."/>
            <person name="Woolford C.A."/>
            <person name="Nett J.E."/>
            <person name="Taff H."/>
            <person name="Norice C.T."/>
            <person name="Andes D.R."/>
            <person name="Lanni F."/>
            <person name="Mitchell A.P."/>
        </authorList>
    </citation>
    <scope>FUNCTION</scope>
</reference>